<proteinExistence type="inferred from homology"/>
<sequence length="330" mass="36993">MDDFRNKLRNFLNNECLWVKNVACTSFTKVYCATTAVSPFFKPISPQGVPDKHYINVTLIILKPKKSHPYITVYINDLAVDCCSTEILQVKPVPCSHFSLIYFGPLIAPPHNVQIPANLSIKASKKSHLTKNQVIFTSKVIHPERLPDGYKSASLIGACAWYSEGAIFQHFLSTDYMSLCPAFKEFPSLSRILSLLTRCDDLSCVPCYGEKIHVNCQSGYTDSDCDGKSNSCPCITSCTALKKDIVPITGHRNLLSLLFDATIQHNITSIKFFSPQTPTTVNNVFCGVLDTGETVECTCEAWNLLMFSDFISRQMIYNCQIMKRFCLRSC</sequence>
<feature type="chain" id="PRO_0000115956" description="Cytoplasmic envelopment protein 2">
    <location>
        <begin position="1"/>
        <end position="330"/>
    </location>
</feature>
<evidence type="ECO:0000255" key="1">
    <source>
        <dbReference type="HAMAP-Rule" id="MF_04039"/>
    </source>
</evidence>
<reference key="1">
    <citation type="journal article" date="1992" name="J. Virol.">
        <title>Primary structure of the herpesvirus saimiri genome.</title>
        <authorList>
            <person name="Albrecht J.-C."/>
            <person name="Nicholas J."/>
            <person name="Biller D."/>
            <person name="Cameron K.R."/>
            <person name="Biesinger B."/>
            <person name="Newman C."/>
            <person name="Wittmann S."/>
            <person name="Craxton M.A."/>
            <person name="Coleman H."/>
            <person name="Fleckenstein B."/>
            <person name="Honess R.W."/>
        </authorList>
    </citation>
    <scope>NUCLEOTIDE SEQUENCE [LARGE SCALE GENOMIC DNA]</scope>
</reference>
<name>CEP2_SHV21</name>
<comment type="function">
    <text evidence="1">Plays a critical role in cytoplasmic virus egress. Participates in the final step of tegumentation and envelope acquisition within the host cytoplasm by directly interacting with the capsid. Upon virion binding to target cell, a signaling cascade is triggered to disrupt the interaction with the capsid, thereby preparing capsid uncoating.</text>
</comment>
<comment type="subunit">
    <text evidence="1">Interacts with cytoplasmic envelopment protein 3 and with the capsid.</text>
</comment>
<comment type="subcellular location">
    <subcellularLocation>
        <location evidence="1">Virion tegument</location>
    </subcellularLocation>
    <subcellularLocation>
        <location evidence="1">Host cytoplasm</location>
    </subcellularLocation>
    <subcellularLocation>
        <location evidence="1">Host nucleus</location>
    </subcellularLocation>
    <text evidence="1">Localizes in the host nucleus up to 18 hours postinfection, but at later times localizes to punctate, cytoplasmic structures.</text>
</comment>
<comment type="similarity">
    <text evidence="1">Belongs to the herpesviridae cytoplasmic envelopment protein 2 family.</text>
</comment>
<dbReference type="EMBL" id="X64346">
    <property type="protein sequence ID" value="CAA45655.1"/>
    <property type="molecule type" value="Genomic_DNA"/>
</dbReference>
<dbReference type="RefSeq" id="NP_040235.1">
    <property type="nucleotide sequence ID" value="NC_001350.1"/>
</dbReference>
<dbReference type="KEGG" id="vg:1682463"/>
<dbReference type="Proteomes" id="UP000000587">
    <property type="component" value="Segment"/>
</dbReference>
<dbReference type="GO" id="GO:0030430">
    <property type="term" value="C:host cell cytoplasm"/>
    <property type="evidence" value="ECO:0007669"/>
    <property type="project" value="UniProtKB-SubCell"/>
</dbReference>
<dbReference type="GO" id="GO:0042025">
    <property type="term" value="C:host cell nucleus"/>
    <property type="evidence" value="ECO:0007669"/>
    <property type="project" value="UniProtKB-SubCell"/>
</dbReference>
<dbReference type="GO" id="GO:0019033">
    <property type="term" value="C:viral tegument"/>
    <property type="evidence" value="ECO:0007669"/>
    <property type="project" value="UniProtKB-SubCell"/>
</dbReference>
<dbReference type="HAMAP" id="MF_04039">
    <property type="entry name" value="HSV_CEP2"/>
    <property type="match status" value="1"/>
</dbReference>
<dbReference type="InterPro" id="IPR004286">
    <property type="entry name" value="Herpes_UL16/UL94"/>
</dbReference>
<dbReference type="Pfam" id="PF03044">
    <property type="entry name" value="Herpes_UL16"/>
    <property type="match status" value="1"/>
</dbReference>
<protein>
    <recommendedName>
        <fullName evidence="1">Cytoplasmic envelopment protein 2</fullName>
    </recommendedName>
</protein>
<accession>Q01022</accession>
<organism>
    <name type="scientific">Saimiriine herpesvirus 2 (strain 11)</name>
    <name type="common">SaHV-2</name>
    <name type="synonym">Herpesvirus saimiri</name>
    <dbReference type="NCBI Taxonomy" id="10383"/>
    <lineage>
        <taxon>Viruses</taxon>
        <taxon>Duplodnaviria</taxon>
        <taxon>Heunggongvirae</taxon>
        <taxon>Peploviricota</taxon>
        <taxon>Herviviricetes</taxon>
        <taxon>Herpesvirales</taxon>
        <taxon>Orthoherpesviridae</taxon>
        <taxon>Gammaherpesvirinae</taxon>
        <taxon>Rhadinovirus</taxon>
        <taxon>Rhadinovirus saimiriinegamma2</taxon>
        <taxon>Saimiriine herpesvirus 2</taxon>
    </lineage>
</organism>
<keyword id="KW-1035">Host cytoplasm</keyword>
<keyword id="KW-1048">Host nucleus</keyword>
<keyword id="KW-0426">Late protein</keyword>
<keyword id="KW-1185">Reference proteome</keyword>
<keyword id="KW-0946">Virion</keyword>
<keyword id="KW-0920">Virion tegument</keyword>
<organismHost>
    <name type="scientific">Saimiri sciureus</name>
    <name type="common">Common squirrel monkey</name>
    <dbReference type="NCBI Taxonomy" id="9521"/>
</organismHost>
<gene>
    <name type="primary">33</name>
</gene>